<evidence type="ECO:0000250" key="1">
    <source>
        <dbReference type="UniProtKB" id="Q72H90"/>
    </source>
</evidence>
<evidence type="ECO:0000305" key="2"/>
<name>Y169_METJA</name>
<organism>
    <name type="scientific">Methanocaldococcus jannaschii (strain ATCC 43067 / DSM 2661 / JAL-1 / JCM 10045 / NBRC 100440)</name>
    <name type="common">Methanococcus jannaschii</name>
    <dbReference type="NCBI Taxonomy" id="243232"/>
    <lineage>
        <taxon>Archaea</taxon>
        <taxon>Methanobacteriati</taxon>
        <taxon>Methanobacteriota</taxon>
        <taxon>Methanomada group</taxon>
        <taxon>Methanococci</taxon>
        <taxon>Methanococcales</taxon>
        <taxon>Methanocaldococcaceae</taxon>
        <taxon>Methanocaldococcus</taxon>
    </lineage>
</organism>
<proteinExistence type="inferred from homology"/>
<comment type="similarity">
    <text evidence="2">Belongs to the ParA family. MinD subfamily.</text>
</comment>
<feature type="chain" id="PRO_0000106728" description="Uncharacterized ATP-binding protein MJ0169">
    <location>
        <begin position="1"/>
        <end position="263"/>
    </location>
</feature>
<feature type="binding site" evidence="1">
    <location>
        <begin position="12"/>
        <end position="19"/>
    </location>
    <ligand>
        <name>ATP</name>
        <dbReference type="ChEBI" id="CHEBI:30616"/>
    </ligand>
</feature>
<keyword id="KW-0067">ATP-binding</keyword>
<keyword id="KW-0547">Nucleotide-binding</keyword>
<keyword id="KW-1185">Reference proteome</keyword>
<protein>
    <recommendedName>
        <fullName>Uncharacterized ATP-binding protein MJ0169</fullName>
    </recommendedName>
</protein>
<reference key="1">
    <citation type="journal article" date="1996" name="Science">
        <title>Complete genome sequence of the methanogenic archaeon, Methanococcus jannaschii.</title>
        <authorList>
            <person name="Bult C.J."/>
            <person name="White O."/>
            <person name="Olsen G.J."/>
            <person name="Zhou L."/>
            <person name="Fleischmann R.D."/>
            <person name="Sutton G.G."/>
            <person name="Blake J.A."/>
            <person name="FitzGerald L.M."/>
            <person name="Clayton R.A."/>
            <person name="Gocayne J.D."/>
            <person name="Kerlavage A.R."/>
            <person name="Dougherty B.A."/>
            <person name="Tomb J.-F."/>
            <person name="Adams M.D."/>
            <person name="Reich C.I."/>
            <person name="Overbeek R."/>
            <person name="Kirkness E.F."/>
            <person name="Weinstock K.G."/>
            <person name="Merrick J.M."/>
            <person name="Glodek A."/>
            <person name="Scott J.L."/>
            <person name="Geoghagen N.S.M."/>
            <person name="Weidman J.F."/>
            <person name="Fuhrmann J.L."/>
            <person name="Nguyen D."/>
            <person name="Utterback T.R."/>
            <person name="Kelley J.M."/>
            <person name="Peterson J.D."/>
            <person name="Sadow P.W."/>
            <person name="Hanna M.C."/>
            <person name="Cotton M.D."/>
            <person name="Roberts K.M."/>
            <person name="Hurst M.A."/>
            <person name="Kaine B.P."/>
            <person name="Borodovsky M."/>
            <person name="Klenk H.-P."/>
            <person name="Fraser C.M."/>
            <person name="Smith H.O."/>
            <person name="Woese C.R."/>
            <person name="Venter J.C."/>
        </authorList>
    </citation>
    <scope>NUCLEOTIDE SEQUENCE [LARGE SCALE GENOMIC DNA]</scope>
    <source>
        <strain>ATCC 43067 / DSM 2661 / JAL-1 / JCM 10045 / NBRC 100440</strain>
    </source>
</reference>
<accession>Q57633</accession>
<sequence length="263" mass="28950">MIFMIITIASGKGGVGKTTTSASLAVALAKLGKKVLAIDGDISMANLGILFNMEKKKPSLHEVLSEEADVRDAIYKHKTGVYVLPTSLSLEGYKKSDIDLLPDVVNEVADDFDYVIIDAPAGLNREMATHLAIADKLLLVVTPEMFSIIDAVRLKESAEMAGTPLMGVVLNRVGRDFGEMGRDEIEMLIKGKVLVEVPEDENVRSAALKKMSVIEYRKNSPASQAYMKLASIIAGVPIYIEDEIKIIRKESFIDKIKRLFRMY</sequence>
<dbReference type="EMBL" id="L77117">
    <property type="protein sequence ID" value="AAB98154.1"/>
    <property type="molecule type" value="Genomic_DNA"/>
</dbReference>
<dbReference type="PIR" id="B64321">
    <property type="entry name" value="B64321"/>
</dbReference>
<dbReference type="SMR" id="Q57633"/>
<dbReference type="FunCoup" id="Q57633">
    <property type="interactions" value="70"/>
</dbReference>
<dbReference type="STRING" id="243232.MJ_0169"/>
<dbReference type="PaxDb" id="243232-MJ_0169"/>
<dbReference type="EnsemblBacteria" id="AAB98154">
    <property type="protein sequence ID" value="AAB98154"/>
    <property type="gene ID" value="MJ_0169"/>
</dbReference>
<dbReference type="KEGG" id="mja:MJ_0169"/>
<dbReference type="eggNOG" id="arCOG00589">
    <property type="taxonomic scope" value="Archaea"/>
</dbReference>
<dbReference type="HOGENOM" id="CLU_037612_0_3_2"/>
<dbReference type="InParanoid" id="Q57633"/>
<dbReference type="PhylomeDB" id="Q57633"/>
<dbReference type="Proteomes" id="UP000000805">
    <property type="component" value="Chromosome"/>
</dbReference>
<dbReference type="GO" id="GO:0009898">
    <property type="term" value="C:cytoplasmic side of plasma membrane"/>
    <property type="evidence" value="ECO:0000318"/>
    <property type="project" value="GO_Central"/>
</dbReference>
<dbReference type="GO" id="GO:0005829">
    <property type="term" value="C:cytosol"/>
    <property type="evidence" value="ECO:0000318"/>
    <property type="project" value="GO_Central"/>
</dbReference>
<dbReference type="GO" id="GO:0005524">
    <property type="term" value="F:ATP binding"/>
    <property type="evidence" value="ECO:0000318"/>
    <property type="project" value="GO_Central"/>
</dbReference>
<dbReference type="GO" id="GO:0016887">
    <property type="term" value="F:ATP hydrolysis activity"/>
    <property type="evidence" value="ECO:0000318"/>
    <property type="project" value="GO_Central"/>
</dbReference>
<dbReference type="FunFam" id="3.40.50.300:FF:000285">
    <property type="entry name" value="Sporulation initiation inhibitor Soj"/>
    <property type="match status" value="1"/>
</dbReference>
<dbReference type="Gene3D" id="3.40.50.300">
    <property type="entry name" value="P-loop containing nucleotide triphosphate hydrolases"/>
    <property type="match status" value="1"/>
</dbReference>
<dbReference type="InterPro" id="IPR025669">
    <property type="entry name" value="AAA_dom"/>
</dbReference>
<dbReference type="InterPro" id="IPR010224">
    <property type="entry name" value="MinD_archaea"/>
</dbReference>
<dbReference type="InterPro" id="IPR025501">
    <property type="entry name" value="MinD_FleN"/>
</dbReference>
<dbReference type="InterPro" id="IPR027417">
    <property type="entry name" value="P-loop_NTPase"/>
</dbReference>
<dbReference type="InterPro" id="IPR050625">
    <property type="entry name" value="ParA/MinD_ATPase"/>
</dbReference>
<dbReference type="NCBIfam" id="TIGR01969">
    <property type="entry name" value="minD_arch"/>
    <property type="match status" value="1"/>
</dbReference>
<dbReference type="PANTHER" id="PTHR43384:SF10">
    <property type="entry name" value="ATPASE INVOLVED IN CHROMOSOME PARTITIONING, PARA_MIND FAMILY"/>
    <property type="match status" value="1"/>
</dbReference>
<dbReference type="PANTHER" id="PTHR43384">
    <property type="entry name" value="SEPTUM SITE-DETERMINING PROTEIN MIND HOMOLOG, CHLOROPLASTIC-RELATED"/>
    <property type="match status" value="1"/>
</dbReference>
<dbReference type="Pfam" id="PF13614">
    <property type="entry name" value="AAA_31"/>
    <property type="match status" value="1"/>
</dbReference>
<dbReference type="PIRSF" id="PIRSF003092">
    <property type="entry name" value="MinD"/>
    <property type="match status" value="1"/>
</dbReference>
<dbReference type="SUPFAM" id="SSF52540">
    <property type="entry name" value="P-loop containing nucleoside triphosphate hydrolases"/>
    <property type="match status" value="1"/>
</dbReference>
<gene>
    <name type="ordered locus">MJ0169</name>
</gene>